<geneLocation type="chloroplast"/>
<protein>
    <recommendedName>
        <fullName evidence="2">ATP synthase subunit alpha, chloroplastic</fullName>
        <ecNumber evidence="2">7.1.2.2</ecNumber>
    </recommendedName>
    <alternativeName>
        <fullName evidence="2">ATP synthase F1 sector subunit alpha</fullName>
    </alternativeName>
    <alternativeName>
        <fullName evidence="2">F-ATPase subunit alpha</fullName>
    </alternativeName>
</protein>
<proteinExistence type="inferred from homology"/>
<accession>A4QL91</accession>
<dbReference type="EC" id="7.1.2.2" evidence="2"/>
<dbReference type="EMBL" id="AP009374">
    <property type="protein sequence ID" value="BAF50446.1"/>
    <property type="molecule type" value="Genomic_DNA"/>
</dbReference>
<dbReference type="RefSeq" id="YP_001123622.1">
    <property type="nucleotide sequence ID" value="NC_009273.1"/>
</dbReference>
<dbReference type="SMR" id="A4QL91"/>
<dbReference type="GeneID" id="4962006"/>
<dbReference type="GO" id="GO:0009535">
    <property type="term" value="C:chloroplast thylakoid membrane"/>
    <property type="evidence" value="ECO:0007669"/>
    <property type="project" value="UniProtKB-SubCell"/>
</dbReference>
<dbReference type="GO" id="GO:0045259">
    <property type="term" value="C:proton-transporting ATP synthase complex"/>
    <property type="evidence" value="ECO:0007669"/>
    <property type="project" value="UniProtKB-KW"/>
</dbReference>
<dbReference type="GO" id="GO:0043531">
    <property type="term" value="F:ADP binding"/>
    <property type="evidence" value="ECO:0007669"/>
    <property type="project" value="TreeGrafter"/>
</dbReference>
<dbReference type="GO" id="GO:0005524">
    <property type="term" value="F:ATP binding"/>
    <property type="evidence" value="ECO:0007669"/>
    <property type="project" value="UniProtKB-UniRule"/>
</dbReference>
<dbReference type="GO" id="GO:0046933">
    <property type="term" value="F:proton-transporting ATP synthase activity, rotational mechanism"/>
    <property type="evidence" value="ECO:0007669"/>
    <property type="project" value="UniProtKB-UniRule"/>
</dbReference>
<dbReference type="CDD" id="cd18113">
    <property type="entry name" value="ATP-synt_F1_alpha_C"/>
    <property type="match status" value="1"/>
</dbReference>
<dbReference type="CDD" id="cd18116">
    <property type="entry name" value="ATP-synt_F1_alpha_N"/>
    <property type="match status" value="1"/>
</dbReference>
<dbReference type="CDD" id="cd01132">
    <property type="entry name" value="F1-ATPase_alpha_CD"/>
    <property type="match status" value="1"/>
</dbReference>
<dbReference type="FunFam" id="1.20.150.20:FF:000001">
    <property type="entry name" value="ATP synthase subunit alpha"/>
    <property type="match status" value="1"/>
</dbReference>
<dbReference type="FunFam" id="2.40.30.20:FF:000001">
    <property type="entry name" value="ATP synthase subunit alpha"/>
    <property type="match status" value="1"/>
</dbReference>
<dbReference type="FunFam" id="3.40.50.300:FF:000002">
    <property type="entry name" value="ATP synthase subunit alpha"/>
    <property type="match status" value="1"/>
</dbReference>
<dbReference type="Gene3D" id="2.40.30.20">
    <property type="match status" value="1"/>
</dbReference>
<dbReference type="Gene3D" id="1.20.150.20">
    <property type="entry name" value="ATP synthase alpha/beta chain, C-terminal domain"/>
    <property type="match status" value="1"/>
</dbReference>
<dbReference type="Gene3D" id="3.40.50.300">
    <property type="entry name" value="P-loop containing nucleotide triphosphate hydrolases"/>
    <property type="match status" value="1"/>
</dbReference>
<dbReference type="HAMAP" id="MF_01346">
    <property type="entry name" value="ATP_synth_alpha_bact"/>
    <property type="match status" value="1"/>
</dbReference>
<dbReference type="InterPro" id="IPR023366">
    <property type="entry name" value="ATP_synth_asu-like_sf"/>
</dbReference>
<dbReference type="InterPro" id="IPR000793">
    <property type="entry name" value="ATP_synth_asu_C"/>
</dbReference>
<dbReference type="InterPro" id="IPR038376">
    <property type="entry name" value="ATP_synth_asu_C_sf"/>
</dbReference>
<dbReference type="InterPro" id="IPR033732">
    <property type="entry name" value="ATP_synth_F1_a_nt-bd_dom"/>
</dbReference>
<dbReference type="InterPro" id="IPR005294">
    <property type="entry name" value="ATP_synth_F1_asu"/>
</dbReference>
<dbReference type="InterPro" id="IPR020003">
    <property type="entry name" value="ATPase_a/bsu_AS"/>
</dbReference>
<dbReference type="InterPro" id="IPR004100">
    <property type="entry name" value="ATPase_F1/V1/A1_a/bsu_N"/>
</dbReference>
<dbReference type="InterPro" id="IPR036121">
    <property type="entry name" value="ATPase_F1/V1/A1_a/bsu_N_sf"/>
</dbReference>
<dbReference type="InterPro" id="IPR000194">
    <property type="entry name" value="ATPase_F1/V1/A1_a/bsu_nucl-bd"/>
</dbReference>
<dbReference type="InterPro" id="IPR027417">
    <property type="entry name" value="P-loop_NTPase"/>
</dbReference>
<dbReference type="NCBIfam" id="TIGR00962">
    <property type="entry name" value="atpA"/>
    <property type="match status" value="1"/>
</dbReference>
<dbReference type="NCBIfam" id="NF009884">
    <property type="entry name" value="PRK13343.1"/>
    <property type="match status" value="1"/>
</dbReference>
<dbReference type="PANTHER" id="PTHR48082">
    <property type="entry name" value="ATP SYNTHASE SUBUNIT ALPHA, MITOCHONDRIAL"/>
    <property type="match status" value="1"/>
</dbReference>
<dbReference type="PANTHER" id="PTHR48082:SF2">
    <property type="entry name" value="ATP SYNTHASE SUBUNIT ALPHA, MITOCHONDRIAL"/>
    <property type="match status" value="1"/>
</dbReference>
<dbReference type="Pfam" id="PF00006">
    <property type="entry name" value="ATP-synt_ab"/>
    <property type="match status" value="1"/>
</dbReference>
<dbReference type="Pfam" id="PF00306">
    <property type="entry name" value="ATP-synt_ab_C"/>
    <property type="match status" value="1"/>
</dbReference>
<dbReference type="Pfam" id="PF02874">
    <property type="entry name" value="ATP-synt_ab_N"/>
    <property type="match status" value="1"/>
</dbReference>
<dbReference type="PIRSF" id="PIRSF039088">
    <property type="entry name" value="F_ATPase_subunit_alpha"/>
    <property type="match status" value="1"/>
</dbReference>
<dbReference type="SUPFAM" id="SSF47917">
    <property type="entry name" value="C-terminal domain of alpha and beta subunits of F1 ATP synthase"/>
    <property type="match status" value="1"/>
</dbReference>
<dbReference type="SUPFAM" id="SSF50615">
    <property type="entry name" value="N-terminal domain of alpha and beta subunits of F1 ATP synthase"/>
    <property type="match status" value="1"/>
</dbReference>
<dbReference type="SUPFAM" id="SSF52540">
    <property type="entry name" value="P-loop containing nucleoside triphosphate hydrolases"/>
    <property type="match status" value="1"/>
</dbReference>
<dbReference type="PROSITE" id="PS00152">
    <property type="entry name" value="ATPASE_ALPHA_BETA"/>
    <property type="match status" value="1"/>
</dbReference>
<evidence type="ECO:0000250" key="1">
    <source>
        <dbReference type="UniProtKB" id="P56757"/>
    </source>
</evidence>
<evidence type="ECO:0000255" key="2">
    <source>
        <dbReference type="HAMAP-Rule" id="MF_01346"/>
    </source>
</evidence>
<gene>
    <name evidence="2" type="primary">atpA</name>
</gene>
<comment type="function">
    <text evidence="2">Produces ATP from ADP in the presence of a proton gradient across the membrane. The alpha chain is a regulatory subunit.</text>
</comment>
<comment type="catalytic activity">
    <reaction evidence="2">
        <text>ATP + H2O + 4 H(+)(in) = ADP + phosphate + 5 H(+)(out)</text>
        <dbReference type="Rhea" id="RHEA:57720"/>
        <dbReference type="ChEBI" id="CHEBI:15377"/>
        <dbReference type="ChEBI" id="CHEBI:15378"/>
        <dbReference type="ChEBI" id="CHEBI:30616"/>
        <dbReference type="ChEBI" id="CHEBI:43474"/>
        <dbReference type="ChEBI" id="CHEBI:456216"/>
        <dbReference type="EC" id="7.1.2.2"/>
    </reaction>
</comment>
<comment type="subunit">
    <text evidence="2">F-type ATPases have 2 components, CF(1) - the catalytic core - and CF(0) - the membrane proton channel. CF(1) has five subunits: alpha(3), beta(3), gamma(1), delta(1), epsilon(1). CF(0) has four main subunits: a, b, b' and c.</text>
</comment>
<comment type="subcellular location">
    <subcellularLocation>
        <location evidence="2">Plastid</location>
        <location evidence="2">Chloroplast thylakoid membrane</location>
        <topology evidence="2">Peripheral membrane protein</topology>
    </subcellularLocation>
</comment>
<comment type="similarity">
    <text evidence="2">Belongs to the ATPase alpha/beta chains family.</text>
</comment>
<reference key="1">
    <citation type="submission" date="2007-03" db="EMBL/GenBank/DDBJ databases">
        <title>Sequencing analysis of Lepidium virginicum JO26 chloroplast DNA.</title>
        <authorList>
            <person name="Hosouchi T."/>
            <person name="Tsuruoka H."/>
            <person name="Kotani H."/>
        </authorList>
    </citation>
    <scope>NUCLEOTIDE SEQUENCE [LARGE SCALE GENOMIC DNA]</scope>
</reference>
<organism>
    <name type="scientific">Lepidium virginicum</name>
    <name type="common">Virginia pepperweed</name>
    <dbReference type="NCBI Taxonomy" id="59292"/>
    <lineage>
        <taxon>Eukaryota</taxon>
        <taxon>Viridiplantae</taxon>
        <taxon>Streptophyta</taxon>
        <taxon>Embryophyta</taxon>
        <taxon>Tracheophyta</taxon>
        <taxon>Spermatophyta</taxon>
        <taxon>Magnoliopsida</taxon>
        <taxon>eudicotyledons</taxon>
        <taxon>Gunneridae</taxon>
        <taxon>Pentapetalae</taxon>
        <taxon>rosids</taxon>
        <taxon>malvids</taxon>
        <taxon>Brassicales</taxon>
        <taxon>Brassicaceae</taxon>
        <taxon>Lepidieae</taxon>
        <taxon>Lepidium</taxon>
    </lineage>
</organism>
<name>ATPA_LEPVR</name>
<feature type="chain" id="PRO_0000339092" description="ATP synthase subunit alpha, chloroplastic">
    <location>
        <begin position="1"/>
        <end position="507"/>
    </location>
</feature>
<feature type="binding site" evidence="2">
    <location>
        <begin position="170"/>
        <end position="177"/>
    </location>
    <ligand>
        <name>ATP</name>
        <dbReference type="ChEBI" id="CHEBI:30616"/>
    </ligand>
</feature>
<feature type="site" description="Required for activity" evidence="2">
    <location>
        <position position="363"/>
    </location>
</feature>
<feature type="modified residue" description="Phosphothreonine" evidence="1">
    <location>
        <position position="257"/>
    </location>
</feature>
<sequence>MVTIRADEISNIIRERIEQYNREVTIVNTGTVLQVGDGIARIYGLDEVMAGELVEFEEGTIGIALNLESNNVGVVLMGDGLMIQEGSSVKATGKIAQIPVSEAYLGRVINALANPIDGRGKIAASESRLIESPAPGIISRRSVYEPLQTGLIAIDSMIPIGRGQRELIIGDRQTGKTAVATDTILNQQGQNVICVYVAIGQKASSVAQVVTSLQERGAMEYTIVVAETADSPATLQYLAPYTGAALAEYFMYREQHTLIIYDDLSKQAQAYRQMSLLLRRPPGREAYPGDVFYLHSRLLERAAKLSSQLGEGSMTALPIVETQAGDVSAYIPTNVISITDGQIFLSADLFNSGIRPAINVGISVSRVGSAAQIKAMKQVAGKLKLELAQFAELEAFAQFSSDLDKATQNQLARGQRLRELLKQSQSAPLTVEEQIMTIYTGTNGYLDGLEIGQVRKFLVQLRTYLKTNKPQFQEIISSTKTLTPEAESLLKEGIQEQLERFLLQEKV</sequence>
<keyword id="KW-0066">ATP synthesis</keyword>
<keyword id="KW-0067">ATP-binding</keyword>
<keyword id="KW-0139">CF(1)</keyword>
<keyword id="KW-0150">Chloroplast</keyword>
<keyword id="KW-0375">Hydrogen ion transport</keyword>
<keyword id="KW-0406">Ion transport</keyword>
<keyword id="KW-0472">Membrane</keyword>
<keyword id="KW-0547">Nucleotide-binding</keyword>
<keyword id="KW-0597">Phosphoprotein</keyword>
<keyword id="KW-0934">Plastid</keyword>
<keyword id="KW-0793">Thylakoid</keyword>
<keyword id="KW-1278">Translocase</keyword>
<keyword id="KW-0813">Transport</keyword>